<gene>
    <name evidence="1" type="primary">engB</name>
    <name type="ordered locus">Abu_0981</name>
</gene>
<proteinExistence type="inferred from homology"/>
<organism>
    <name type="scientific">Aliarcobacter butzleri (strain RM4018)</name>
    <name type="common">Arcobacter butzleri</name>
    <dbReference type="NCBI Taxonomy" id="367737"/>
    <lineage>
        <taxon>Bacteria</taxon>
        <taxon>Pseudomonadati</taxon>
        <taxon>Campylobacterota</taxon>
        <taxon>Epsilonproteobacteria</taxon>
        <taxon>Campylobacterales</taxon>
        <taxon>Arcobacteraceae</taxon>
        <taxon>Aliarcobacter</taxon>
    </lineage>
</organism>
<reference key="1">
    <citation type="journal article" date="2007" name="PLoS ONE">
        <title>The complete genome sequence and analysis of the Epsilonproteobacterium Arcobacter butzleri.</title>
        <authorList>
            <person name="Miller W.G."/>
            <person name="Parker C.T."/>
            <person name="Rubenfield M."/>
            <person name="Mendz G.L."/>
            <person name="Woesten M.M.S.M."/>
            <person name="Ussery D.W."/>
            <person name="Stolz J.F."/>
            <person name="Binnewies T.T."/>
            <person name="Hallin P.F."/>
            <person name="Wang G."/>
            <person name="Malek J.A."/>
            <person name="Rogosin A."/>
            <person name="Stanker L.H."/>
            <person name="Mandrell R.E."/>
        </authorList>
    </citation>
    <scope>NUCLEOTIDE SEQUENCE [LARGE SCALE GENOMIC DNA]</scope>
    <source>
        <strain>RM4018</strain>
    </source>
</reference>
<feature type="chain" id="PRO_1000059468" description="Probable GTP-binding protein EngB">
    <location>
        <begin position="1"/>
        <end position="200"/>
    </location>
</feature>
<feature type="domain" description="EngB-type G" evidence="1">
    <location>
        <begin position="22"/>
        <end position="199"/>
    </location>
</feature>
<feature type="binding site" evidence="1">
    <location>
        <begin position="30"/>
        <end position="37"/>
    </location>
    <ligand>
        <name>GTP</name>
        <dbReference type="ChEBI" id="CHEBI:37565"/>
    </ligand>
</feature>
<feature type="binding site" evidence="1">
    <location>
        <position position="37"/>
    </location>
    <ligand>
        <name>Mg(2+)</name>
        <dbReference type="ChEBI" id="CHEBI:18420"/>
    </ligand>
</feature>
<feature type="binding site" evidence="1">
    <location>
        <begin position="57"/>
        <end position="61"/>
    </location>
    <ligand>
        <name>GTP</name>
        <dbReference type="ChEBI" id="CHEBI:37565"/>
    </ligand>
</feature>
<feature type="binding site" evidence="1">
    <location>
        <position position="59"/>
    </location>
    <ligand>
        <name>Mg(2+)</name>
        <dbReference type="ChEBI" id="CHEBI:18420"/>
    </ligand>
</feature>
<feature type="binding site" evidence="1">
    <location>
        <begin position="85"/>
        <end position="88"/>
    </location>
    <ligand>
        <name>GTP</name>
        <dbReference type="ChEBI" id="CHEBI:37565"/>
    </ligand>
</feature>
<feature type="binding site" evidence="1">
    <location>
        <begin position="155"/>
        <end position="158"/>
    </location>
    <ligand>
        <name>GTP</name>
        <dbReference type="ChEBI" id="CHEBI:37565"/>
    </ligand>
</feature>
<feature type="binding site" evidence="1">
    <location>
        <begin position="177"/>
        <end position="180"/>
    </location>
    <ligand>
        <name>GTP</name>
        <dbReference type="ChEBI" id="CHEBI:37565"/>
    </ligand>
</feature>
<evidence type="ECO:0000255" key="1">
    <source>
        <dbReference type="HAMAP-Rule" id="MF_00321"/>
    </source>
</evidence>
<name>ENGB_ALIB4</name>
<comment type="function">
    <text evidence="1">Necessary for normal cell division and for the maintenance of normal septation.</text>
</comment>
<comment type="cofactor">
    <cofactor evidence="1">
        <name>Mg(2+)</name>
        <dbReference type="ChEBI" id="CHEBI:18420"/>
    </cofactor>
</comment>
<comment type="similarity">
    <text evidence="1">Belongs to the TRAFAC class TrmE-Era-EngA-EngB-Septin-like GTPase superfamily. EngB GTPase family.</text>
</comment>
<protein>
    <recommendedName>
        <fullName evidence="1">Probable GTP-binding protein EngB</fullName>
    </recommendedName>
</protein>
<keyword id="KW-0131">Cell cycle</keyword>
<keyword id="KW-0132">Cell division</keyword>
<keyword id="KW-0342">GTP-binding</keyword>
<keyword id="KW-0460">Magnesium</keyword>
<keyword id="KW-0479">Metal-binding</keyword>
<keyword id="KW-0547">Nucleotide-binding</keyword>
<keyword id="KW-1185">Reference proteome</keyword>
<keyword id="KW-0717">Septation</keyword>
<dbReference type="EMBL" id="CP000361">
    <property type="protein sequence ID" value="ABV67241.1"/>
    <property type="molecule type" value="Genomic_DNA"/>
</dbReference>
<dbReference type="RefSeq" id="WP_012012698.1">
    <property type="nucleotide sequence ID" value="NC_009850.1"/>
</dbReference>
<dbReference type="SMR" id="A8ETG7"/>
<dbReference type="STRING" id="367737.Abu_0981"/>
<dbReference type="GeneID" id="24304595"/>
<dbReference type="KEGG" id="abu:Abu_0981"/>
<dbReference type="eggNOG" id="COG0218">
    <property type="taxonomic scope" value="Bacteria"/>
</dbReference>
<dbReference type="HOGENOM" id="CLU_033732_3_2_7"/>
<dbReference type="Proteomes" id="UP000001136">
    <property type="component" value="Chromosome"/>
</dbReference>
<dbReference type="GO" id="GO:0005829">
    <property type="term" value="C:cytosol"/>
    <property type="evidence" value="ECO:0007669"/>
    <property type="project" value="TreeGrafter"/>
</dbReference>
<dbReference type="GO" id="GO:0005525">
    <property type="term" value="F:GTP binding"/>
    <property type="evidence" value="ECO:0007669"/>
    <property type="project" value="UniProtKB-UniRule"/>
</dbReference>
<dbReference type="GO" id="GO:0046872">
    <property type="term" value="F:metal ion binding"/>
    <property type="evidence" value="ECO:0007669"/>
    <property type="project" value="UniProtKB-KW"/>
</dbReference>
<dbReference type="GO" id="GO:0000917">
    <property type="term" value="P:division septum assembly"/>
    <property type="evidence" value="ECO:0007669"/>
    <property type="project" value="UniProtKB-KW"/>
</dbReference>
<dbReference type="CDD" id="cd01876">
    <property type="entry name" value="YihA_EngB"/>
    <property type="match status" value="1"/>
</dbReference>
<dbReference type="Gene3D" id="3.40.50.300">
    <property type="entry name" value="P-loop containing nucleotide triphosphate hydrolases"/>
    <property type="match status" value="1"/>
</dbReference>
<dbReference type="HAMAP" id="MF_00321">
    <property type="entry name" value="GTPase_EngB"/>
    <property type="match status" value="1"/>
</dbReference>
<dbReference type="InterPro" id="IPR030393">
    <property type="entry name" value="G_ENGB_dom"/>
</dbReference>
<dbReference type="InterPro" id="IPR006073">
    <property type="entry name" value="GTP-bd"/>
</dbReference>
<dbReference type="InterPro" id="IPR019987">
    <property type="entry name" value="GTP-bd_ribosome_bio_YsxC"/>
</dbReference>
<dbReference type="InterPro" id="IPR027417">
    <property type="entry name" value="P-loop_NTPase"/>
</dbReference>
<dbReference type="NCBIfam" id="TIGR03598">
    <property type="entry name" value="GTPase_YsxC"/>
    <property type="match status" value="1"/>
</dbReference>
<dbReference type="PANTHER" id="PTHR11649:SF13">
    <property type="entry name" value="ENGB-TYPE G DOMAIN-CONTAINING PROTEIN"/>
    <property type="match status" value="1"/>
</dbReference>
<dbReference type="PANTHER" id="PTHR11649">
    <property type="entry name" value="MSS1/TRME-RELATED GTP-BINDING PROTEIN"/>
    <property type="match status" value="1"/>
</dbReference>
<dbReference type="Pfam" id="PF01926">
    <property type="entry name" value="MMR_HSR1"/>
    <property type="match status" value="1"/>
</dbReference>
<dbReference type="SUPFAM" id="SSF52540">
    <property type="entry name" value="P-loop containing nucleoside triphosphate hydrolases"/>
    <property type="match status" value="1"/>
</dbReference>
<dbReference type="PROSITE" id="PS51706">
    <property type="entry name" value="G_ENGB"/>
    <property type="match status" value="1"/>
</dbReference>
<sequence length="200" mass="22502">MTIVDAKFLQSAQSVNDSPAPNVAEVAFLGRSNVGKSSILNSLTSRNGLAKSSSTPGKTQLINYFEIKFKTKNEETPYLFARFVDLPGFGYAKVAKSLKAEWNKNLTGYLQLRPNLQIFVHLIDSRHPELEIDKNVDEFLKEIKRGDQIIVNAFTKIDKLNSSELSKLKRDYPDGIFLSNLKKRGIIDLQDKITGYLFGN</sequence>
<accession>A8ETG7</accession>